<name>MENG_BACCR</name>
<feature type="chain" id="PRO_0000193239" description="Demethylmenaquinone methyltransferase">
    <location>
        <begin position="1"/>
        <end position="237"/>
    </location>
</feature>
<feature type="binding site" evidence="1">
    <location>
        <position position="58"/>
    </location>
    <ligand>
        <name>S-adenosyl-L-methionine</name>
        <dbReference type="ChEBI" id="CHEBI:59789"/>
    </ligand>
</feature>
<feature type="binding site" evidence="1">
    <location>
        <position position="79"/>
    </location>
    <ligand>
        <name>S-adenosyl-L-methionine</name>
        <dbReference type="ChEBI" id="CHEBI:59789"/>
    </ligand>
</feature>
<feature type="binding site" evidence="1">
    <location>
        <begin position="106"/>
        <end position="107"/>
    </location>
    <ligand>
        <name>S-adenosyl-L-methionine</name>
        <dbReference type="ChEBI" id="CHEBI:59789"/>
    </ligand>
</feature>
<proteinExistence type="inferred from homology"/>
<sequence length="237" mass="26901">MQQSKEERVHDVFEKISDKYDVMNSVISFQRHKAWRKETMRIMDVQPGSQALDVCCGTADWTIALAGAVGEQGKVVGLDFSENMLSVGKQKVEALQLKQVELLHGNAMELPFEDNTFDYVTIGFGLRNVPDYMHVLKEMTRVVKPGGKVICLETSQPTMIGFRQGYILYFKYIMPLFGKMFAKSYKEYSWLQESASTFPGMKELAQMFEQAGLERVQVKPFTFGVAAMHLGIKPESK</sequence>
<organism>
    <name type="scientific">Bacillus cereus (strain ATCC 14579 / DSM 31 / CCUG 7414 / JCM 2152 / NBRC 15305 / NCIMB 9373 / NCTC 2599 / NRRL B-3711)</name>
    <dbReference type="NCBI Taxonomy" id="226900"/>
    <lineage>
        <taxon>Bacteria</taxon>
        <taxon>Bacillati</taxon>
        <taxon>Bacillota</taxon>
        <taxon>Bacilli</taxon>
        <taxon>Bacillales</taxon>
        <taxon>Bacillaceae</taxon>
        <taxon>Bacillus</taxon>
        <taxon>Bacillus cereus group</taxon>
    </lineage>
</organism>
<accession>Q81FQ6</accession>
<reference key="1">
    <citation type="journal article" date="2003" name="Nature">
        <title>Genome sequence of Bacillus cereus and comparative analysis with Bacillus anthracis.</title>
        <authorList>
            <person name="Ivanova N."/>
            <person name="Sorokin A."/>
            <person name="Anderson I."/>
            <person name="Galleron N."/>
            <person name="Candelon B."/>
            <person name="Kapatral V."/>
            <person name="Bhattacharyya A."/>
            <person name="Reznik G."/>
            <person name="Mikhailova N."/>
            <person name="Lapidus A."/>
            <person name="Chu L."/>
            <person name="Mazur M."/>
            <person name="Goltsman E."/>
            <person name="Larsen N."/>
            <person name="D'Souza M."/>
            <person name="Walunas T."/>
            <person name="Grechkin Y."/>
            <person name="Pusch G."/>
            <person name="Haselkorn R."/>
            <person name="Fonstein M."/>
            <person name="Ehrlich S.D."/>
            <person name="Overbeek R."/>
            <person name="Kyrpides N.C."/>
        </authorList>
    </citation>
    <scope>NUCLEOTIDE SEQUENCE [LARGE SCALE GENOMIC DNA]</scope>
    <source>
        <strain>ATCC 14579 / DSM 31 / CCUG 7414 / JCM 2152 / NBRC 15305 / NCIMB 9373 / NCTC 2599 / NRRL B-3711</strain>
    </source>
</reference>
<evidence type="ECO:0000255" key="1">
    <source>
        <dbReference type="HAMAP-Rule" id="MF_01813"/>
    </source>
</evidence>
<dbReference type="EC" id="2.1.1.163" evidence="1"/>
<dbReference type="EMBL" id="AE016877">
    <property type="protein sequence ID" value="AAP08493.1"/>
    <property type="molecule type" value="Genomic_DNA"/>
</dbReference>
<dbReference type="RefSeq" id="NP_831292.1">
    <property type="nucleotide sequence ID" value="NC_004722.1"/>
</dbReference>
<dbReference type="RefSeq" id="WP_001187674.1">
    <property type="nucleotide sequence ID" value="NZ_CP138336.1"/>
</dbReference>
<dbReference type="SMR" id="Q81FQ6"/>
<dbReference type="STRING" id="226900.BC_1513"/>
<dbReference type="KEGG" id="bce:BC1513"/>
<dbReference type="PATRIC" id="fig|226900.8.peg.1490"/>
<dbReference type="HOGENOM" id="CLU_037990_0_0_9"/>
<dbReference type="OrthoDB" id="9808140at2"/>
<dbReference type="UniPathway" id="UPA00079">
    <property type="reaction ID" value="UER00169"/>
</dbReference>
<dbReference type="Proteomes" id="UP000001417">
    <property type="component" value="Chromosome"/>
</dbReference>
<dbReference type="GO" id="GO:0043770">
    <property type="term" value="F:demethylmenaquinone methyltransferase activity"/>
    <property type="evidence" value="ECO:0007669"/>
    <property type="project" value="UniProtKB-UniRule"/>
</dbReference>
<dbReference type="GO" id="GO:0008168">
    <property type="term" value="F:methyltransferase activity"/>
    <property type="evidence" value="ECO:0000318"/>
    <property type="project" value="GO_Central"/>
</dbReference>
<dbReference type="GO" id="GO:0009234">
    <property type="term" value="P:menaquinone biosynthetic process"/>
    <property type="evidence" value="ECO:0007669"/>
    <property type="project" value="UniProtKB-UniRule"/>
</dbReference>
<dbReference type="GO" id="GO:0032259">
    <property type="term" value="P:methylation"/>
    <property type="evidence" value="ECO:0007669"/>
    <property type="project" value="UniProtKB-KW"/>
</dbReference>
<dbReference type="CDD" id="cd02440">
    <property type="entry name" value="AdoMet_MTases"/>
    <property type="match status" value="1"/>
</dbReference>
<dbReference type="FunFam" id="3.40.50.150:FF:000086">
    <property type="entry name" value="Demethylmenaquinone methyltransferase"/>
    <property type="match status" value="1"/>
</dbReference>
<dbReference type="Gene3D" id="3.40.50.150">
    <property type="entry name" value="Vaccinia Virus protein VP39"/>
    <property type="match status" value="1"/>
</dbReference>
<dbReference type="HAMAP" id="MF_01813">
    <property type="entry name" value="MenG_UbiE_methyltr"/>
    <property type="match status" value="1"/>
</dbReference>
<dbReference type="InterPro" id="IPR014122">
    <property type="entry name" value="MenG_heptapren"/>
</dbReference>
<dbReference type="InterPro" id="IPR029063">
    <property type="entry name" value="SAM-dependent_MTases_sf"/>
</dbReference>
<dbReference type="InterPro" id="IPR004033">
    <property type="entry name" value="UbiE/COQ5_MeTrFase"/>
</dbReference>
<dbReference type="InterPro" id="IPR023576">
    <property type="entry name" value="UbiE/COQ5_MeTrFase_CS"/>
</dbReference>
<dbReference type="NCBIfam" id="TIGR02752">
    <property type="entry name" value="MenG_heptapren"/>
    <property type="match status" value="1"/>
</dbReference>
<dbReference type="NCBIfam" id="TIGR01934">
    <property type="entry name" value="MenG_MenH_UbiE"/>
    <property type="match status" value="1"/>
</dbReference>
<dbReference type="NCBIfam" id="NF001243">
    <property type="entry name" value="PRK00216.1-4"/>
    <property type="match status" value="1"/>
</dbReference>
<dbReference type="NCBIfam" id="NF001244">
    <property type="entry name" value="PRK00216.1-5"/>
    <property type="match status" value="1"/>
</dbReference>
<dbReference type="PANTHER" id="PTHR43591:SF24">
    <property type="entry name" value="2-METHOXY-6-POLYPRENYL-1,4-BENZOQUINOL METHYLASE, MITOCHONDRIAL"/>
    <property type="match status" value="1"/>
</dbReference>
<dbReference type="PANTHER" id="PTHR43591">
    <property type="entry name" value="METHYLTRANSFERASE"/>
    <property type="match status" value="1"/>
</dbReference>
<dbReference type="Pfam" id="PF01209">
    <property type="entry name" value="Ubie_methyltran"/>
    <property type="match status" value="1"/>
</dbReference>
<dbReference type="SUPFAM" id="SSF53335">
    <property type="entry name" value="S-adenosyl-L-methionine-dependent methyltransferases"/>
    <property type="match status" value="1"/>
</dbReference>
<dbReference type="PROSITE" id="PS51608">
    <property type="entry name" value="SAM_MT_UBIE"/>
    <property type="match status" value="1"/>
</dbReference>
<dbReference type="PROSITE" id="PS01183">
    <property type="entry name" value="UBIE_1"/>
    <property type="match status" value="1"/>
</dbReference>
<dbReference type="PROSITE" id="PS01184">
    <property type="entry name" value="UBIE_2"/>
    <property type="match status" value="1"/>
</dbReference>
<gene>
    <name evidence="1" type="primary">menG</name>
    <name type="ordered locus">BC_1513</name>
</gene>
<keyword id="KW-0474">Menaquinone biosynthesis</keyword>
<keyword id="KW-0489">Methyltransferase</keyword>
<keyword id="KW-1185">Reference proteome</keyword>
<keyword id="KW-0949">S-adenosyl-L-methionine</keyword>
<keyword id="KW-0808">Transferase</keyword>
<comment type="function">
    <text evidence="1">Methyltransferase required for the conversion of demethylmenaquinol (DMKH2) to menaquinol (MKH2).</text>
</comment>
<comment type="catalytic activity">
    <reaction evidence="1">
        <text>a 2-demethylmenaquinol + S-adenosyl-L-methionine = a menaquinol + S-adenosyl-L-homocysteine + H(+)</text>
        <dbReference type="Rhea" id="RHEA:42640"/>
        <dbReference type="Rhea" id="RHEA-COMP:9539"/>
        <dbReference type="Rhea" id="RHEA-COMP:9563"/>
        <dbReference type="ChEBI" id="CHEBI:15378"/>
        <dbReference type="ChEBI" id="CHEBI:18151"/>
        <dbReference type="ChEBI" id="CHEBI:55437"/>
        <dbReference type="ChEBI" id="CHEBI:57856"/>
        <dbReference type="ChEBI" id="CHEBI:59789"/>
        <dbReference type="EC" id="2.1.1.163"/>
    </reaction>
</comment>
<comment type="pathway">
    <text evidence="1">Quinol/quinone metabolism; menaquinone biosynthesis; menaquinol from 1,4-dihydroxy-2-naphthoate: step 2/2.</text>
</comment>
<comment type="similarity">
    <text evidence="1">Belongs to the class I-like SAM-binding methyltransferase superfamily. MenG/UbiE family.</text>
</comment>
<protein>
    <recommendedName>
        <fullName evidence="1">Demethylmenaquinone methyltransferase</fullName>
        <ecNumber evidence="1">2.1.1.163</ecNumber>
    </recommendedName>
</protein>